<comment type="function">
    <text>Enhances the translation of downstream ORFs on polycistronic mRNAs derived from figwort mosaic virus.</text>
</comment>
<comment type="subcellular location">
    <subcellularLocation>
        <location>Host cytoplasm</location>
    </subcellularLocation>
    <text>Found in cytoplasmic occlusion bodies.</text>
</comment>
<comment type="miscellaneous">
    <text>The inclusion bodies are the site of viral DNA synthesis, virion assembly and accumulation in the infected cell.</text>
</comment>
<comment type="similarity">
    <text evidence="2">Belongs to the caulimoviridae viroplasmin family.</text>
</comment>
<organism>
    <name type="scientific">Figwort mosaic virus (strain DxS)</name>
    <name type="common">FMV</name>
    <dbReference type="NCBI Taxonomy" id="10650"/>
    <lineage>
        <taxon>Viruses</taxon>
        <taxon>Riboviria</taxon>
        <taxon>Pararnavirae</taxon>
        <taxon>Artverviricota</taxon>
        <taxon>Revtraviricetes</taxon>
        <taxon>Ortervirales</taxon>
        <taxon>Caulimoviridae</taxon>
        <taxon>Caulimovirus</taxon>
        <taxon>Caulimovirus tesselloscrophulariae</taxon>
    </lineage>
</organism>
<feature type="chain" id="PRO_0000222048" description="Transactivator/viroplasmin protein">
    <location>
        <begin position="1"/>
        <end position="512"/>
    </location>
</feature>
<feature type="region of interest" description="Disordered" evidence="1">
    <location>
        <begin position="76"/>
        <end position="123"/>
    </location>
</feature>
<feature type="region of interest" description="Disordered" evidence="1">
    <location>
        <begin position="474"/>
        <end position="512"/>
    </location>
</feature>
<feature type="compositionally biased region" description="Polar residues" evidence="1">
    <location>
        <begin position="476"/>
        <end position="487"/>
    </location>
</feature>
<feature type="compositionally biased region" description="Basic and acidic residues" evidence="1">
    <location>
        <begin position="499"/>
        <end position="512"/>
    </location>
</feature>
<organismHost>
    <name type="scientific">Scrophularia californica</name>
    <name type="common">California bee plant</name>
    <dbReference type="NCBI Taxonomy" id="46031"/>
</organismHost>
<accession>P09524</accession>
<name>IBMP_FMVD</name>
<proteinExistence type="inferred from homology"/>
<protein>
    <recommendedName>
        <fullName>Transactivator/viroplasmin protein</fullName>
        <shortName>Tav</shortName>
    </recommendedName>
    <alternativeName>
        <fullName>Inclusion body matrix protein</fullName>
    </alternativeName>
</protein>
<reference key="1">
    <citation type="journal article" date="1987" name="Nucleic Acids Res.">
        <title>Sequence of figwort mosaic virus DNA (caulimovirus group).</title>
        <authorList>
            <person name="Richins R.D."/>
            <person name="Scholthof H.B."/>
            <person name="Shepherd R.J."/>
        </authorList>
    </citation>
    <scope>NUCLEOTIDE SEQUENCE [GENOMIC DNA]</scope>
</reference>
<gene>
    <name type="ORF">ORF VI</name>
</gene>
<evidence type="ECO:0000256" key="1">
    <source>
        <dbReference type="SAM" id="MobiDB-lite"/>
    </source>
</evidence>
<evidence type="ECO:0000305" key="2"/>
<dbReference type="EMBL" id="X06166">
    <property type="protein sequence ID" value="CAA29528.1"/>
    <property type="molecule type" value="Genomic_DNA"/>
</dbReference>
<dbReference type="PIR" id="S01284">
    <property type="entry name" value="WMCVFM"/>
</dbReference>
<dbReference type="RefSeq" id="NP_619549.1">
    <property type="nucleotide sequence ID" value="NC_003554.1"/>
</dbReference>
<dbReference type="SMR" id="P09524"/>
<dbReference type="KEGG" id="vg:940158"/>
<dbReference type="Proteomes" id="UP000008622">
    <property type="component" value="Segment"/>
</dbReference>
<dbReference type="GO" id="GO:0030430">
    <property type="term" value="C:host cell cytoplasm"/>
    <property type="evidence" value="ECO:0007669"/>
    <property type="project" value="UniProtKB-SubCell"/>
</dbReference>
<dbReference type="GO" id="GO:0006417">
    <property type="term" value="P:regulation of translation"/>
    <property type="evidence" value="ECO:0007669"/>
    <property type="project" value="UniProtKB-KW"/>
</dbReference>
<sequence length="512" mass="58207">MEELKALRLKEKILEIELNSVKMQIHAYEESLKATTVNSVQEGEILQTESIPECPAQGKETPNPVKADSLLKTILGNERQNPLEGKSSKLVNLTPKSDKDKVKSSPVANGSGKDSTNPLNPVALGKSKMTILGQKQADEEEFKPDYLRAASNGQSWFAVYKGPNKEFFTEWEIVADICKKRQKSKRFRSKEQAEVSISLYNKDIQDPVNFLRPVKLVKEERAAQPLKFKAIAAEQTIQFDEFRQIWEKSRLSDLEDGVQEKFYTNDSASKSTYTFVENAEPYLVHTAFRAGLAKVIYPSPNLQELKWFPEGIVKAIKNFRKKVLNAKDAAIFIKIFSSIPDWVQSTRYEPYHFIQIGIAKTKKELPSSKVCKEEFSVQSLNKVRVQSLQTISQKLQEINEESSIKVNYCSSTCIMVSKFQKKTSTEDLKLVGIFESNLVNIEQLACGDQTKKEWCRIVRRTYQKHLCLYCKDKADSSSTSGEQNNVEKSCPDSPLTNAYDERSDDHKRIPSI</sequence>
<keyword id="KW-1035">Host cytoplasm</keyword>
<keyword id="KW-1185">Reference proteome</keyword>
<keyword id="KW-0810">Translation regulation</keyword>